<proteinExistence type="inferred from homology"/>
<dbReference type="EC" id="3.6.4.-" evidence="1"/>
<dbReference type="EMBL" id="AE017333">
    <property type="protein sequence ID" value="AAU41768.1"/>
    <property type="molecule type" value="Genomic_DNA"/>
</dbReference>
<dbReference type="EMBL" id="CP000002">
    <property type="protein sequence ID" value="AAU24405.1"/>
    <property type="molecule type" value="Genomic_DNA"/>
</dbReference>
<dbReference type="RefSeq" id="WP_003183985.1">
    <property type="nucleotide sequence ID" value="NC_006322.1"/>
</dbReference>
<dbReference type="SMR" id="Q65GP6"/>
<dbReference type="STRING" id="279010.BL01143"/>
<dbReference type="GeneID" id="92860506"/>
<dbReference type="KEGG" id="bld:BLi02900"/>
<dbReference type="KEGG" id="bli:BL01143"/>
<dbReference type="eggNOG" id="COG2255">
    <property type="taxonomic scope" value="Bacteria"/>
</dbReference>
<dbReference type="HOGENOM" id="CLU_055599_1_0_9"/>
<dbReference type="Proteomes" id="UP000000606">
    <property type="component" value="Chromosome"/>
</dbReference>
<dbReference type="Bgee" id="BL01143">
    <property type="expression patterns" value="Expressed in muscle tissue and 8 other cell types or tissues"/>
</dbReference>
<dbReference type="GO" id="GO:0005737">
    <property type="term" value="C:cytoplasm"/>
    <property type="evidence" value="ECO:0007669"/>
    <property type="project" value="UniProtKB-SubCell"/>
</dbReference>
<dbReference type="GO" id="GO:0048476">
    <property type="term" value="C:Holliday junction resolvase complex"/>
    <property type="evidence" value="ECO:0007669"/>
    <property type="project" value="UniProtKB-UniRule"/>
</dbReference>
<dbReference type="GO" id="GO:0005524">
    <property type="term" value="F:ATP binding"/>
    <property type="evidence" value="ECO:0007669"/>
    <property type="project" value="UniProtKB-UniRule"/>
</dbReference>
<dbReference type="GO" id="GO:0016887">
    <property type="term" value="F:ATP hydrolysis activity"/>
    <property type="evidence" value="ECO:0007669"/>
    <property type="project" value="InterPro"/>
</dbReference>
<dbReference type="GO" id="GO:0000400">
    <property type="term" value="F:four-way junction DNA binding"/>
    <property type="evidence" value="ECO:0007669"/>
    <property type="project" value="UniProtKB-UniRule"/>
</dbReference>
<dbReference type="GO" id="GO:0009378">
    <property type="term" value="F:four-way junction helicase activity"/>
    <property type="evidence" value="ECO:0007669"/>
    <property type="project" value="InterPro"/>
</dbReference>
<dbReference type="GO" id="GO:0006310">
    <property type="term" value="P:DNA recombination"/>
    <property type="evidence" value="ECO:0007669"/>
    <property type="project" value="UniProtKB-UniRule"/>
</dbReference>
<dbReference type="GO" id="GO:0006281">
    <property type="term" value="P:DNA repair"/>
    <property type="evidence" value="ECO:0007669"/>
    <property type="project" value="UniProtKB-UniRule"/>
</dbReference>
<dbReference type="CDD" id="cd00009">
    <property type="entry name" value="AAA"/>
    <property type="match status" value="1"/>
</dbReference>
<dbReference type="FunFam" id="3.40.50.300:FF:000073">
    <property type="entry name" value="Holliday junction ATP-dependent DNA helicase RuvB"/>
    <property type="match status" value="1"/>
</dbReference>
<dbReference type="Gene3D" id="1.10.8.60">
    <property type="match status" value="1"/>
</dbReference>
<dbReference type="Gene3D" id="3.40.50.300">
    <property type="entry name" value="P-loop containing nucleotide triphosphate hydrolases"/>
    <property type="match status" value="1"/>
</dbReference>
<dbReference type="Gene3D" id="1.10.10.10">
    <property type="entry name" value="Winged helix-like DNA-binding domain superfamily/Winged helix DNA-binding domain"/>
    <property type="match status" value="1"/>
</dbReference>
<dbReference type="HAMAP" id="MF_00016">
    <property type="entry name" value="DNA_HJ_migration_RuvB"/>
    <property type="match status" value="1"/>
</dbReference>
<dbReference type="InterPro" id="IPR003593">
    <property type="entry name" value="AAA+_ATPase"/>
</dbReference>
<dbReference type="InterPro" id="IPR041445">
    <property type="entry name" value="AAA_lid_4"/>
</dbReference>
<dbReference type="InterPro" id="IPR004605">
    <property type="entry name" value="DNA_helicase_Holl-junc_RuvB"/>
</dbReference>
<dbReference type="InterPro" id="IPR027417">
    <property type="entry name" value="P-loop_NTPase"/>
</dbReference>
<dbReference type="InterPro" id="IPR008824">
    <property type="entry name" value="RuvB-like_N"/>
</dbReference>
<dbReference type="InterPro" id="IPR008823">
    <property type="entry name" value="RuvB_C"/>
</dbReference>
<dbReference type="InterPro" id="IPR036388">
    <property type="entry name" value="WH-like_DNA-bd_sf"/>
</dbReference>
<dbReference type="InterPro" id="IPR036390">
    <property type="entry name" value="WH_DNA-bd_sf"/>
</dbReference>
<dbReference type="NCBIfam" id="NF000868">
    <property type="entry name" value="PRK00080.1"/>
    <property type="match status" value="1"/>
</dbReference>
<dbReference type="NCBIfam" id="TIGR00635">
    <property type="entry name" value="ruvB"/>
    <property type="match status" value="1"/>
</dbReference>
<dbReference type="PANTHER" id="PTHR42848">
    <property type="match status" value="1"/>
</dbReference>
<dbReference type="PANTHER" id="PTHR42848:SF1">
    <property type="entry name" value="HOLLIDAY JUNCTION BRANCH MIGRATION COMPLEX SUBUNIT RUVB"/>
    <property type="match status" value="1"/>
</dbReference>
<dbReference type="Pfam" id="PF17864">
    <property type="entry name" value="AAA_lid_4"/>
    <property type="match status" value="1"/>
</dbReference>
<dbReference type="Pfam" id="PF05491">
    <property type="entry name" value="RuvB_C"/>
    <property type="match status" value="1"/>
</dbReference>
<dbReference type="Pfam" id="PF05496">
    <property type="entry name" value="RuvB_N"/>
    <property type="match status" value="1"/>
</dbReference>
<dbReference type="SMART" id="SM00382">
    <property type="entry name" value="AAA"/>
    <property type="match status" value="1"/>
</dbReference>
<dbReference type="SUPFAM" id="SSF52540">
    <property type="entry name" value="P-loop containing nucleoside triphosphate hydrolases"/>
    <property type="match status" value="1"/>
</dbReference>
<dbReference type="SUPFAM" id="SSF46785">
    <property type="entry name" value="Winged helix' DNA-binding domain"/>
    <property type="match status" value="1"/>
</dbReference>
<feature type="chain" id="PRO_0000165491" description="Holliday junction branch migration complex subunit RuvB">
    <location>
        <begin position="1"/>
        <end position="334"/>
    </location>
</feature>
<feature type="region of interest" description="Large ATPase domain (RuvB-L)" evidence="1">
    <location>
        <begin position="1"/>
        <end position="182"/>
    </location>
</feature>
<feature type="region of interest" description="Small ATPAse domain (RuvB-S)" evidence="1">
    <location>
        <begin position="183"/>
        <end position="253"/>
    </location>
</feature>
<feature type="region of interest" description="Head domain (RuvB-H)" evidence="1">
    <location>
        <begin position="256"/>
        <end position="334"/>
    </location>
</feature>
<feature type="binding site" evidence="1">
    <location>
        <position position="21"/>
    </location>
    <ligand>
        <name>ATP</name>
        <dbReference type="ChEBI" id="CHEBI:30616"/>
    </ligand>
</feature>
<feature type="binding site" evidence="1">
    <location>
        <position position="22"/>
    </location>
    <ligand>
        <name>ATP</name>
        <dbReference type="ChEBI" id="CHEBI:30616"/>
    </ligand>
</feature>
<feature type="binding site" evidence="1">
    <location>
        <position position="63"/>
    </location>
    <ligand>
        <name>ATP</name>
        <dbReference type="ChEBI" id="CHEBI:30616"/>
    </ligand>
</feature>
<feature type="binding site" evidence="1">
    <location>
        <position position="66"/>
    </location>
    <ligand>
        <name>ATP</name>
        <dbReference type="ChEBI" id="CHEBI:30616"/>
    </ligand>
</feature>
<feature type="binding site" evidence="1">
    <location>
        <position position="67"/>
    </location>
    <ligand>
        <name>ATP</name>
        <dbReference type="ChEBI" id="CHEBI:30616"/>
    </ligand>
</feature>
<feature type="binding site" evidence="1">
    <location>
        <position position="67"/>
    </location>
    <ligand>
        <name>Mg(2+)</name>
        <dbReference type="ChEBI" id="CHEBI:18420"/>
    </ligand>
</feature>
<feature type="binding site" evidence="1">
    <location>
        <position position="68"/>
    </location>
    <ligand>
        <name>ATP</name>
        <dbReference type="ChEBI" id="CHEBI:30616"/>
    </ligand>
</feature>
<feature type="binding site" evidence="1">
    <location>
        <begin position="129"/>
        <end position="131"/>
    </location>
    <ligand>
        <name>ATP</name>
        <dbReference type="ChEBI" id="CHEBI:30616"/>
    </ligand>
</feature>
<feature type="binding site" evidence="1">
    <location>
        <position position="172"/>
    </location>
    <ligand>
        <name>ATP</name>
        <dbReference type="ChEBI" id="CHEBI:30616"/>
    </ligand>
</feature>
<feature type="binding site" evidence="1">
    <location>
        <position position="182"/>
    </location>
    <ligand>
        <name>ATP</name>
        <dbReference type="ChEBI" id="CHEBI:30616"/>
    </ligand>
</feature>
<feature type="binding site" evidence="1">
    <location>
        <position position="219"/>
    </location>
    <ligand>
        <name>ATP</name>
        <dbReference type="ChEBI" id="CHEBI:30616"/>
    </ligand>
</feature>
<feature type="binding site" evidence="1">
    <location>
        <position position="311"/>
    </location>
    <ligand>
        <name>DNA</name>
        <dbReference type="ChEBI" id="CHEBI:16991"/>
    </ligand>
</feature>
<feature type="binding site" evidence="1">
    <location>
        <position position="316"/>
    </location>
    <ligand>
        <name>DNA</name>
        <dbReference type="ChEBI" id="CHEBI:16991"/>
    </ligand>
</feature>
<gene>
    <name evidence="1" type="primary">ruvB</name>
    <name type="ordered locus">BLi02900</name>
    <name type="ordered locus">BL01143</name>
</gene>
<reference key="1">
    <citation type="journal article" date="2004" name="J. Mol. Microbiol. Biotechnol.">
        <title>The complete genome sequence of Bacillus licheniformis DSM13, an organism with great industrial potential.</title>
        <authorList>
            <person name="Veith B."/>
            <person name="Herzberg C."/>
            <person name="Steckel S."/>
            <person name="Feesche J."/>
            <person name="Maurer K.H."/>
            <person name="Ehrenreich P."/>
            <person name="Baeumer S."/>
            <person name="Henne A."/>
            <person name="Liesegang H."/>
            <person name="Merkl R."/>
            <person name="Ehrenreich A."/>
            <person name="Gottschalk G."/>
        </authorList>
    </citation>
    <scope>NUCLEOTIDE SEQUENCE [LARGE SCALE GENOMIC DNA]</scope>
    <source>
        <strain>ATCC 14580 / DSM 13 / JCM 2505 / CCUG 7422 / NBRC 12200 / NCIMB 9375 / NCTC 10341 / NRRL NRS-1264 / Gibson 46</strain>
    </source>
</reference>
<reference key="2">
    <citation type="journal article" date="2004" name="Genome Biol.">
        <title>Complete genome sequence of the industrial bacterium Bacillus licheniformis and comparisons with closely related Bacillus species.</title>
        <authorList>
            <person name="Rey M.W."/>
            <person name="Ramaiya P."/>
            <person name="Nelson B.A."/>
            <person name="Brody-Karpin S.D."/>
            <person name="Zaretsky E.J."/>
            <person name="Tang M."/>
            <person name="Lopez de Leon A."/>
            <person name="Xiang H."/>
            <person name="Gusti V."/>
            <person name="Clausen I.G."/>
            <person name="Olsen P.B."/>
            <person name="Rasmussen M.D."/>
            <person name="Andersen J.T."/>
            <person name="Joergensen P.L."/>
            <person name="Larsen T.S."/>
            <person name="Sorokin A."/>
            <person name="Bolotin A."/>
            <person name="Lapidus A."/>
            <person name="Galleron N."/>
            <person name="Ehrlich S.D."/>
            <person name="Berka R.M."/>
        </authorList>
    </citation>
    <scope>NUCLEOTIDE SEQUENCE [LARGE SCALE GENOMIC DNA]</scope>
    <source>
        <strain>ATCC 14580 / DSM 13 / JCM 2505 / CCUG 7422 / NBRC 12200 / NCIMB 9375 / NCTC 10341 / NRRL NRS-1264 / Gibson 46</strain>
    </source>
</reference>
<sequence length="334" mass="37287">MDERLVSSELDNHESAIEQSLRPQRLAQYIGQEKVKDNLKVFIEAAKMREETLDHVLLYGPPGLGKTTLAAIIANEMGVNLRTTSGPAIERPGDLAAILTALEPGDVLFIDEIHRLHRSIEEVLYPAMEDFCLDIVIGKGPSARSVRLDLPPFTLVGATTRVGLLTAPLRDRFGVLSRLEYYTRDELSEIVIRTAELFEVDIDSLSALEIARRSRGTPRIANRLLRRVRDFAQVLGNSSITEEVAVDALERLQVDKLGLDHIDRKLLMGMIEKFGGGPVGIDTISATIGEESHTIEDVYEPYLLQIGFIQRTPRGRIVTPDVYSHFKMEVPNHD</sequence>
<protein>
    <recommendedName>
        <fullName evidence="1">Holliday junction branch migration complex subunit RuvB</fullName>
        <ecNumber evidence="1">3.6.4.-</ecNumber>
    </recommendedName>
</protein>
<organism>
    <name type="scientific">Bacillus licheniformis (strain ATCC 14580 / DSM 13 / JCM 2505 / CCUG 7422 / NBRC 12200 / NCIMB 9375 / NCTC 10341 / NRRL NRS-1264 / Gibson 46)</name>
    <dbReference type="NCBI Taxonomy" id="279010"/>
    <lineage>
        <taxon>Bacteria</taxon>
        <taxon>Bacillati</taxon>
        <taxon>Bacillota</taxon>
        <taxon>Bacilli</taxon>
        <taxon>Bacillales</taxon>
        <taxon>Bacillaceae</taxon>
        <taxon>Bacillus</taxon>
    </lineage>
</organism>
<keyword id="KW-0067">ATP-binding</keyword>
<keyword id="KW-0963">Cytoplasm</keyword>
<keyword id="KW-0227">DNA damage</keyword>
<keyword id="KW-0233">DNA recombination</keyword>
<keyword id="KW-0234">DNA repair</keyword>
<keyword id="KW-0238">DNA-binding</keyword>
<keyword id="KW-0378">Hydrolase</keyword>
<keyword id="KW-0547">Nucleotide-binding</keyword>
<keyword id="KW-1185">Reference proteome</keyword>
<comment type="function">
    <text evidence="1">The RuvA-RuvB-RuvC complex processes Holliday junction (HJ) DNA during genetic recombination and DNA repair, while the RuvA-RuvB complex plays an important role in the rescue of blocked DNA replication forks via replication fork reversal (RFR). RuvA specifically binds to HJ cruciform DNA, conferring on it an open structure. The RuvB hexamer acts as an ATP-dependent pump, pulling dsDNA into and through the RuvAB complex. RuvB forms 2 homohexamers on either side of HJ DNA bound by 1 or 2 RuvA tetramers; 4 subunits per hexamer contact DNA at a time. Coordinated motions by a converter formed by DNA-disengaged RuvB subunits stimulates ATP hydrolysis and nucleotide exchange. Immobilization of the converter enables RuvB to convert the ATP-contained energy into a lever motion, pulling 2 nucleotides of DNA out of the RuvA tetramer per ATP hydrolyzed, thus driving DNA branch migration. The RuvB motors rotate together with the DNA substrate, which together with the progressing nucleotide cycle form the mechanistic basis for DNA recombination by continuous HJ branch migration. Branch migration allows RuvC to scan DNA until it finds its consensus sequence, where it cleaves and resolves cruciform DNA.</text>
</comment>
<comment type="catalytic activity">
    <reaction evidence="1">
        <text>ATP + H2O = ADP + phosphate + H(+)</text>
        <dbReference type="Rhea" id="RHEA:13065"/>
        <dbReference type="ChEBI" id="CHEBI:15377"/>
        <dbReference type="ChEBI" id="CHEBI:15378"/>
        <dbReference type="ChEBI" id="CHEBI:30616"/>
        <dbReference type="ChEBI" id="CHEBI:43474"/>
        <dbReference type="ChEBI" id="CHEBI:456216"/>
    </reaction>
</comment>
<comment type="subunit">
    <text evidence="1">Homohexamer. Forms an RuvA(8)-RuvB(12)-Holliday junction (HJ) complex. HJ DNA is sandwiched between 2 RuvA tetramers; dsDNA enters through RuvA and exits via RuvB. An RuvB hexamer assembles on each DNA strand where it exits the tetramer. Each RuvB hexamer is contacted by two RuvA subunits (via domain III) on 2 adjacent RuvB subunits; this complex drives branch migration. In the full resolvosome a probable DNA-RuvA(4)-RuvB(12)-RuvC(2) complex forms which resolves the HJ.</text>
</comment>
<comment type="subcellular location">
    <subcellularLocation>
        <location evidence="1">Cytoplasm</location>
    </subcellularLocation>
</comment>
<comment type="domain">
    <text evidence="1">Has 3 domains, the large (RuvB-L) and small ATPase (RuvB-S) domains and the C-terminal head (RuvB-H) domain. The head domain binds DNA, while the ATPase domains jointly bind ATP, ADP or are empty depending on the state of the subunit in the translocation cycle. During a single DNA translocation step the structure of each domain remains the same, but their relative positions change.</text>
</comment>
<comment type="similarity">
    <text evidence="1">Belongs to the RuvB family.</text>
</comment>
<evidence type="ECO:0000255" key="1">
    <source>
        <dbReference type="HAMAP-Rule" id="MF_00016"/>
    </source>
</evidence>
<accession>Q65GP6</accession>
<accession>Q62S55</accession>
<name>RUVB_BACLD</name>